<protein>
    <recommendedName>
        <fullName evidence="1">Large ribosomal subunit protein eL40</fullName>
    </recommendedName>
    <alternativeName>
        <fullName evidence="2">50S ribosomal protein L40e</fullName>
    </alternativeName>
</protein>
<proteinExistence type="evidence at protein level"/>
<dbReference type="EMBL" id="CP000561">
    <property type="protein sequence ID" value="ABO09266.1"/>
    <property type="molecule type" value="Genomic_DNA"/>
</dbReference>
<dbReference type="RefSeq" id="WP_011850524.1">
    <property type="nucleotide sequence ID" value="NC_009073.1"/>
</dbReference>
<dbReference type="PDB" id="9E6Q">
    <property type="method" value="EM"/>
    <property type="resolution" value="1.95 A"/>
    <property type="chains" value="Ag=1-53"/>
</dbReference>
<dbReference type="PDB" id="9E71">
    <property type="method" value="EM"/>
    <property type="resolution" value="2.36 A"/>
    <property type="chains" value="Ag=1-53"/>
</dbReference>
<dbReference type="PDB" id="9E7F">
    <property type="method" value="EM"/>
    <property type="resolution" value="2.53 A"/>
    <property type="chains" value="Ag=1-53"/>
</dbReference>
<dbReference type="PDBsum" id="9E6Q"/>
<dbReference type="PDBsum" id="9E71"/>
<dbReference type="PDBsum" id="9E7F"/>
<dbReference type="EMDB" id="EMD-47578"/>
<dbReference type="EMDB" id="EMD-47628"/>
<dbReference type="EMDB" id="EMD-47668"/>
<dbReference type="SMR" id="A3MX99"/>
<dbReference type="STRING" id="410359.Pcal_1849"/>
<dbReference type="GeneID" id="4908310"/>
<dbReference type="KEGG" id="pcl:Pcal_1849"/>
<dbReference type="eggNOG" id="arCOG04049">
    <property type="taxonomic scope" value="Archaea"/>
</dbReference>
<dbReference type="HOGENOM" id="CLU_175093_1_0_2"/>
<dbReference type="OrthoDB" id="45138at2157"/>
<dbReference type="Proteomes" id="UP000001431">
    <property type="component" value="Chromosome"/>
</dbReference>
<dbReference type="GO" id="GO:1990904">
    <property type="term" value="C:ribonucleoprotein complex"/>
    <property type="evidence" value="ECO:0007669"/>
    <property type="project" value="UniProtKB-KW"/>
</dbReference>
<dbReference type="GO" id="GO:0005840">
    <property type="term" value="C:ribosome"/>
    <property type="evidence" value="ECO:0007669"/>
    <property type="project" value="UniProtKB-KW"/>
</dbReference>
<dbReference type="GO" id="GO:0003735">
    <property type="term" value="F:structural constituent of ribosome"/>
    <property type="evidence" value="ECO:0007669"/>
    <property type="project" value="InterPro"/>
</dbReference>
<dbReference type="GO" id="GO:0006412">
    <property type="term" value="P:translation"/>
    <property type="evidence" value="ECO:0007669"/>
    <property type="project" value="UniProtKB-UniRule"/>
</dbReference>
<dbReference type="Gene3D" id="4.10.1060.50">
    <property type="match status" value="1"/>
</dbReference>
<dbReference type="HAMAP" id="MF_00788">
    <property type="entry name" value="Ribosomal_eL40"/>
    <property type="match status" value="1"/>
</dbReference>
<dbReference type="InterPro" id="IPR023657">
    <property type="entry name" value="Ribosomal_eL40_arc"/>
</dbReference>
<dbReference type="InterPro" id="IPR001975">
    <property type="entry name" value="Ribosomal_eL40_dom"/>
</dbReference>
<dbReference type="InterPro" id="IPR038587">
    <property type="entry name" value="Ribosomal_eL40_sf"/>
</dbReference>
<dbReference type="InterPro" id="IPR011332">
    <property type="entry name" value="Ribosomal_zn-bd"/>
</dbReference>
<dbReference type="NCBIfam" id="NF003161">
    <property type="entry name" value="PRK04136.1"/>
    <property type="match status" value="1"/>
</dbReference>
<dbReference type="PANTHER" id="PTHR39649">
    <property type="entry name" value="50S RIBOSOMAL PROTEIN L40E"/>
    <property type="match status" value="1"/>
</dbReference>
<dbReference type="PANTHER" id="PTHR39649:SF1">
    <property type="entry name" value="LARGE RIBOSOMAL SUBUNIT PROTEIN EL40"/>
    <property type="match status" value="1"/>
</dbReference>
<dbReference type="Pfam" id="PF01020">
    <property type="entry name" value="Ribosomal_L40e"/>
    <property type="match status" value="1"/>
</dbReference>
<dbReference type="SMART" id="SM01377">
    <property type="entry name" value="Ribosomal_L40e"/>
    <property type="match status" value="1"/>
</dbReference>
<dbReference type="SUPFAM" id="SSF57829">
    <property type="entry name" value="Zn-binding ribosomal proteins"/>
    <property type="match status" value="1"/>
</dbReference>
<reference key="1">
    <citation type="submission" date="2007-02" db="EMBL/GenBank/DDBJ databases">
        <title>Complete sequence of Pyrobaculum calidifontis JCM 11548.</title>
        <authorList>
            <consortium name="US DOE Joint Genome Institute"/>
            <person name="Copeland A."/>
            <person name="Lucas S."/>
            <person name="Lapidus A."/>
            <person name="Barry K."/>
            <person name="Glavina del Rio T."/>
            <person name="Dalin E."/>
            <person name="Tice H."/>
            <person name="Pitluck S."/>
            <person name="Chain P."/>
            <person name="Malfatti S."/>
            <person name="Shin M."/>
            <person name="Vergez L."/>
            <person name="Schmutz J."/>
            <person name="Larimer F."/>
            <person name="Land M."/>
            <person name="Hauser L."/>
            <person name="Kyrpides N."/>
            <person name="Mikhailova N."/>
            <person name="Cozen A.E."/>
            <person name="Fitz-Gibbon S.T."/>
            <person name="House C.H."/>
            <person name="Saltikov C."/>
            <person name="Lowe T.M."/>
            <person name="Richardson P."/>
        </authorList>
    </citation>
    <scope>NUCLEOTIDE SEQUENCE [LARGE SCALE GENOMIC DNA]</scope>
    <source>
        <strain>DSM 21063 / JCM 11548 / VA1</strain>
    </source>
</reference>
<keyword id="KW-0002">3D-structure</keyword>
<keyword id="KW-0687">Ribonucleoprotein</keyword>
<keyword id="KW-0689">Ribosomal protein</keyword>
<gene>
    <name evidence="1" type="primary">rpl40e</name>
    <name type="ordered locus">Pcal_1849</name>
</gene>
<organism>
    <name type="scientific">Pyrobaculum calidifontis (strain DSM 21063 / JCM 11548 / VA1)</name>
    <dbReference type="NCBI Taxonomy" id="410359"/>
    <lineage>
        <taxon>Archaea</taxon>
        <taxon>Thermoproteota</taxon>
        <taxon>Thermoprotei</taxon>
        <taxon>Thermoproteales</taxon>
        <taxon>Thermoproteaceae</taxon>
        <taxon>Pyrobaculum</taxon>
    </lineage>
</organism>
<evidence type="ECO:0000255" key="1">
    <source>
        <dbReference type="HAMAP-Rule" id="MF_00788"/>
    </source>
</evidence>
<evidence type="ECO:0000305" key="2"/>
<accession>A3MX99</accession>
<feature type="chain" id="PRO_1000046892" description="Large ribosomal subunit protein eL40">
    <location>
        <begin position="1"/>
        <end position="53"/>
    </location>
</feature>
<sequence length="53" mass="6340">MPITLDPEKLAIVLQHRFNYKICRNCGARNPPDAEKCRRCRSRNLRPKKFKKK</sequence>
<comment type="similarity">
    <text evidence="1">Belongs to the eukaryotic ribosomal protein eL40 family.</text>
</comment>
<name>RL40_PYRCJ</name>